<proteinExistence type="inferred from homology"/>
<comment type="function">
    <text evidence="1">This regulatory protein, when combined with SAM (S-adenosylmethionine) represses the expression of the methionine regulon and of enzymes involved in SAM synthesis.</text>
</comment>
<comment type="subunit">
    <text evidence="1">Homodimer.</text>
</comment>
<comment type="subcellular location">
    <subcellularLocation>
        <location evidence="1">Cytoplasm</location>
    </subcellularLocation>
</comment>
<comment type="domain">
    <text>Does not bind DNA by a helix-turn-helix motif.</text>
</comment>
<comment type="similarity">
    <text evidence="1">Belongs to the MetJ family.</text>
</comment>
<name>METJ_SALSV</name>
<evidence type="ECO:0000255" key="1">
    <source>
        <dbReference type="HAMAP-Rule" id="MF_00744"/>
    </source>
</evidence>
<sequence>MAEWSGEYISPYAEHGKKSEQVKKITVSIPLKVLKILTDERTRRQVNNLRHATNSELLCEAFLHAFTGQPLPDDADLRKERSDEIPEAAKEIMREMGIDPETWEY</sequence>
<dbReference type="EMBL" id="CP001127">
    <property type="protein sequence ID" value="ACF89648.1"/>
    <property type="molecule type" value="Genomic_DNA"/>
</dbReference>
<dbReference type="RefSeq" id="WP_000852811.1">
    <property type="nucleotide sequence ID" value="NC_011094.1"/>
</dbReference>
<dbReference type="SMR" id="B4TPW1"/>
<dbReference type="GeneID" id="66758351"/>
<dbReference type="KEGG" id="sew:SeSA_A4316"/>
<dbReference type="HOGENOM" id="CLU_142318_0_0_6"/>
<dbReference type="Proteomes" id="UP000001865">
    <property type="component" value="Chromosome"/>
</dbReference>
<dbReference type="GO" id="GO:0005737">
    <property type="term" value="C:cytoplasm"/>
    <property type="evidence" value="ECO:0007669"/>
    <property type="project" value="UniProtKB-SubCell"/>
</dbReference>
<dbReference type="GO" id="GO:0003677">
    <property type="term" value="F:DNA binding"/>
    <property type="evidence" value="ECO:0007669"/>
    <property type="project" value="UniProtKB-KW"/>
</dbReference>
<dbReference type="GO" id="GO:0003700">
    <property type="term" value="F:DNA-binding transcription factor activity"/>
    <property type="evidence" value="ECO:0007669"/>
    <property type="project" value="InterPro"/>
</dbReference>
<dbReference type="GO" id="GO:0009086">
    <property type="term" value="P:methionine biosynthetic process"/>
    <property type="evidence" value="ECO:0007669"/>
    <property type="project" value="UniProtKB-UniRule"/>
</dbReference>
<dbReference type="GO" id="GO:0045892">
    <property type="term" value="P:negative regulation of DNA-templated transcription"/>
    <property type="evidence" value="ECO:0007669"/>
    <property type="project" value="UniProtKB-UniRule"/>
</dbReference>
<dbReference type="CDD" id="cd00490">
    <property type="entry name" value="Met_repressor_MetJ"/>
    <property type="match status" value="1"/>
</dbReference>
<dbReference type="FunFam" id="1.10.140.10:FF:000001">
    <property type="entry name" value="Met repressor"/>
    <property type="match status" value="1"/>
</dbReference>
<dbReference type="Gene3D" id="1.10.140.10">
    <property type="entry name" value="MET Apo-Repressor, subunit A"/>
    <property type="match status" value="1"/>
</dbReference>
<dbReference type="HAMAP" id="MF_00744">
    <property type="entry name" value="MetJ"/>
    <property type="match status" value="1"/>
</dbReference>
<dbReference type="InterPro" id="IPR002084">
    <property type="entry name" value="Met_repressor_MetJ"/>
</dbReference>
<dbReference type="InterPro" id="IPR023453">
    <property type="entry name" value="Met_repressor_MetJ_dom_sf"/>
</dbReference>
<dbReference type="InterPro" id="IPR010985">
    <property type="entry name" value="Ribbon_hlx_hlx"/>
</dbReference>
<dbReference type="NCBIfam" id="NF003622">
    <property type="entry name" value="PRK05264.1"/>
    <property type="match status" value="1"/>
</dbReference>
<dbReference type="Pfam" id="PF01340">
    <property type="entry name" value="MetJ"/>
    <property type="match status" value="1"/>
</dbReference>
<dbReference type="SUPFAM" id="SSF47598">
    <property type="entry name" value="Ribbon-helix-helix"/>
    <property type="match status" value="1"/>
</dbReference>
<accession>B4TPW1</accession>
<protein>
    <recommendedName>
        <fullName evidence="1">Met repressor</fullName>
    </recommendedName>
    <alternativeName>
        <fullName evidence="1">Met regulon regulatory protein MetJ</fullName>
    </alternativeName>
</protein>
<gene>
    <name evidence="1" type="primary">metJ</name>
    <name type="ordered locus">SeSA_A4316</name>
</gene>
<keyword id="KW-0028">Amino-acid biosynthesis</keyword>
<keyword id="KW-0963">Cytoplasm</keyword>
<keyword id="KW-0238">DNA-binding</keyword>
<keyword id="KW-0486">Methionine biosynthesis</keyword>
<keyword id="KW-0678">Repressor</keyword>
<keyword id="KW-0804">Transcription</keyword>
<keyword id="KW-0805">Transcription regulation</keyword>
<reference key="1">
    <citation type="journal article" date="2011" name="J. Bacteriol.">
        <title>Comparative genomics of 28 Salmonella enterica isolates: evidence for CRISPR-mediated adaptive sublineage evolution.</title>
        <authorList>
            <person name="Fricke W.F."/>
            <person name="Mammel M.K."/>
            <person name="McDermott P.F."/>
            <person name="Tartera C."/>
            <person name="White D.G."/>
            <person name="Leclerc J.E."/>
            <person name="Ravel J."/>
            <person name="Cebula T.A."/>
        </authorList>
    </citation>
    <scope>NUCLEOTIDE SEQUENCE [LARGE SCALE GENOMIC DNA]</scope>
    <source>
        <strain>CVM19633</strain>
    </source>
</reference>
<organism>
    <name type="scientific">Salmonella schwarzengrund (strain CVM19633)</name>
    <dbReference type="NCBI Taxonomy" id="439843"/>
    <lineage>
        <taxon>Bacteria</taxon>
        <taxon>Pseudomonadati</taxon>
        <taxon>Pseudomonadota</taxon>
        <taxon>Gammaproteobacteria</taxon>
        <taxon>Enterobacterales</taxon>
        <taxon>Enterobacteriaceae</taxon>
        <taxon>Salmonella</taxon>
    </lineage>
</organism>
<feature type="chain" id="PRO_1000133222" description="Met repressor">
    <location>
        <begin position="1"/>
        <end position="105"/>
    </location>
</feature>